<comment type="function">
    <text evidence="3">Sesquiterpene cyclase catalyzing the production of beta-farnesene from farnesyl diphosphate.</text>
</comment>
<comment type="catalytic activity">
    <reaction evidence="3">
        <text>(2E,6E)-farnesyl diphosphate = (E)-beta-farnesene + diphosphate</text>
        <dbReference type="Rhea" id="RHEA:27425"/>
        <dbReference type="ChEBI" id="CHEBI:10418"/>
        <dbReference type="ChEBI" id="CHEBI:33019"/>
        <dbReference type="ChEBI" id="CHEBI:175763"/>
        <dbReference type="EC" id="4.2.3.47"/>
    </reaction>
</comment>
<comment type="cofactor">
    <cofactor evidence="1">
        <name>Mg(2+)</name>
        <dbReference type="ChEBI" id="CHEBI:18420"/>
    </cofactor>
    <cofactor evidence="1">
        <name>Co(2+)</name>
        <dbReference type="ChEBI" id="CHEBI:48828"/>
    </cofactor>
    <cofactor evidence="1">
        <name>Mn(2+)</name>
        <dbReference type="ChEBI" id="CHEBI:29035"/>
    </cofactor>
</comment>
<comment type="pathway">
    <text>Secondary metabolite biosynthesis; terpenoid biosynthesis.</text>
</comment>
<comment type="subcellular location">
    <subcellularLocation>
        <location evidence="4">Cytoplasm</location>
    </subcellularLocation>
</comment>
<comment type="domain">
    <text>The Asp-Asp-Xaa-Xaa-Asp/Glu (DDXXD/E) motif is important for the catalytic activity, presumably through binding to Mg(2+).</text>
</comment>
<comment type="similarity">
    <text evidence="4">Belongs to the terpene synthase family.</text>
</comment>
<organism>
    <name type="scientific">Citrus junos</name>
    <name type="common">Yuzu</name>
    <name type="synonym">Citrus ichangensis x Citrus reticulata var. austera</name>
    <dbReference type="NCBI Taxonomy" id="135197"/>
    <lineage>
        <taxon>Eukaryota</taxon>
        <taxon>Viridiplantae</taxon>
        <taxon>Streptophyta</taxon>
        <taxon>Embryophyta</taxon>
        <taxon>Tracheophyta</taxon>
        <taxon>Spermatophyta</taxon>
        <taxon>Magnoliopsida</taxon>
        <taxon>eudicotyledons</taxon>
        <taxon>Gunneridae</taxon>
        <taxon>Pentapetalae</taxon>
        <taxon>rosids</taxon>
        <taxon>malvids</taxon>
        <taxon>Sapindales</taxon>
        <taxon>Rutaceae</taxon>
        <taxon>Aurantioideae</taxon>
        <taxon>Citrus</taxon>
    </lineage>
</organism>
<accession>Q94JS8</accession>
<protein>
    <recommendedName>
        <fullName>(E)-beta-farnesene synthase</fullName>
        <shortName>CjFS</shortName>
        <ecNumber>4.2.3.47</ecNumber>
    </recommendedName>
    <alternativeName>
        <fullName>Terpene synthase 10</fullName>
    </alternativeName>
</protein>
<feature type="chain" id="PRO_0000402129" description="(E)-beta-farnesene synthase">
    <location>
        <begin position="1"/>
        <end position="560"/>
    </location>
</feature>
<feature type="short sequence motif" description="DDXXD motif">
    <location>
        <begin position="312"/>
        <end position="316"/>
    </location>
</feature>
<feature type="binding site" evidence="2">
    <location>
        <position position="312"/>
    </location>
    <ligand>
        <name>Mg(2+)</name>
        <dbReference type="ChEBI" id="CHEBI:18420"/>
        <label>1</label>
    </ligand>
</feature>
<feature type="binding site" evidence="2">
    <location>
        <position position="312"/>
    </location>
    <ligand>
        <name>Mg(2+)</name>
        <dbReference type="ChEBI" id="CHEBI:18420"/>
        <label>2</label>
    </ligand>
</feature>
<feature type="binding site" evidence="2">
    <location>
        <position position="316"/>
    </location>
    <ligand>
        <name>Mg(2+)</name>
        <dbReference type="ChEBI" id="CHEBI:18420"/>
        <label>1</label>
    </ligand>
</feature>
<feature type="binding site" evidence="2">
    <location>
        <position position="316"/>
    </location>
    <ligand>
        <name>Mg(2+)</name>
        <dbReference type="ChEBI" id="CHEBI:18420"/>
        <label>2</label>
    </ligand>
</feature>
<feature type="binding site" evidence="2">
    <location>
        <position position="457"/>
    </location>
    <ligand>
        <name>Mg(2+)</name>
        <dbReference type="ChEBI" id="CHEBI:18420"/>
        <label>3</label>
    </ligand>
</feature>
<feature type="binding site" evidence="2">
    <location>
        <position position="465"/>
    </location>
    <ligand>
        <name>Mg(2+)</name>
        <dbReference type="ChEBI" id="CHEBI:18420"/>
        <label>3</label>
    </ligand>
</feature>
<sequence length="560" mass="64223">MKDMSIPLLAAVSSSTEETVRPIADFHPTLWGNHFLKSAADVETIDAATQEQHAALKQEVRRMITTTANKLAQKLHMIDAVQRLGVAYHFEKEIEDELGKVSHDLDSDDLYVVSLRFRLFRQQGVKISCDVFDKFKDDEGKFKESLINDIRGMLSLYEAAYLAIRGEDILDEAIVFTTTHLKSVISISDHSHANSNLAEQIRHSLQIPLRKAAARLEARYFLDIYSRDDLHDETLLKFAKLDFNILQAAHQKEASIMTRWWNDLGFPKKVPYARDRIIETYIWMLLGVSYEPNLAFGRIFASKVVCMITTIDDTFDAYGTFEELTLFTEAVTRWDIGLIDTLPEYMKFIVKALLDIYREAEEELAKEGRSYGIPYAKQMMQELIILYFTEAKWLYKGYVPTFDEYKSVALRSIGLRTLAVASFVDLGDFIATKDNFECILKNAKSLKATETIGRLMDDIAGYKFEQKRGHNPSAVECYKNQHGVSEEEAVKELLLEVANSWKDINEELLNPTTVPLPMLQRLLYFARSGHFIYDDGHDRYTHSLMMKRQVALLLTEPLAI</sequence>
<proteinExistence type="evidence at protein level"/>
<name>FARS_CITJU</name>
<dbReference type="EC" id="4.2.3.47"/>
<dbReference type="EMBL" id="AF374462">
    <property type="protein sequence ID" value="AAK54279.1"/>
    <property type="molecule type" value="mRNA"/>
</dbReference>
<dbReference type="SMR" id="Q94JS8"/>
<dbReference type="KEGG" id="ag:AAK54279"/>
<dbReference type="BioCyc" id="MetaCyc:MONOMER-13547"/>
<dbReference type="UniPathway" id="UPA00213"/>
<dbReference type="GO" id="GO:0005737">
    <property type="term" value="C:cytoplasm"/>
    <property type="evidence" value="ECO:0007669"/>
    <property type="project" value="UniProtKB-SubCell"/>
</dbReference>
<dbReference type="GO" id="GO:0000287">
    <property type="term" value="F:magnesium ion binding"/>
    <property type="evidence" value="ECO:0007669"/>
    <property type="project" value="InterPro"/>
</dbReference>
<dbReference type="GO" id="GO:0010333">
    <property type="term" value="F:terpene synthase activity"/>
    <property type="evidence" value="ECO:0007669"/>
    <property type="project" value="InterPro"/>
</dbReference>
<dbReference type="GO" id="GO:0016102">
    <property type="term" value="P:diterpenoid biosynthetic process"/>
    <property type="evidence" value="ECO:0007669"/>
    <property type="project" value="InterPro"/>
</dbReference>
<dbReference type="CDD" id="cd00684">
    <property type="entry name" value="Terpene_cyclase_plant_C1"/>
    <property type="match status" value="1"/>
</dbReference>
<dbReference type="FunFam" id="1.10.600.10:FF:000007">
    <property type="entry name" value="Isoprene synthase, chloroplastic"/>
    <property type="match status" value="1"/>
</dbReference>
<dbReference type="FunFam" id="1.50.10.130:FF:000001">
    <property type="entry name" value="Isoprene synthase, chloroplastic"/>
    <property type="match status" value="1"/>
</dbReference>
<dbReference type="Gene3D" id="1.10.600.10">
    <property type="entry name" value="Farnesyl Diphosphate Synthase"/>
    <property type="match status" value="1"/>
</dbReference>
<dbReference type="Gene3D" id="1.50.10.130">
    <property type="entry name" value="Terpene synthase, N-terminal domain"/>
    <property type="match status" value="1"/>
</dbReference>
<dbReference type="InterPro" id="IPR008949">
    <property type="entry name" value="Isoprenoid_synthase_dom_sf"/>
</dbReference>
<dbReference type="InterPro" id="IPR034741">
    <property type="entry name" value="Terpene_cyclase-like_1_C"/>
</dbReference>
<dbReference type="InterPro" id="IPR044814">
    <property type="entry name" value="Terpene_cyclase_plant_C1"/>
</dbReference>
<dbReference type="InterPro" id="IPR001906">
    <property type="entry name" value="Terpene_synth_N"/>
</dbReference>
<dbReference type="InterPro" id="IPR036965">
    <property type="entry name" value="Terpene_synth_N_sf"/>
</dbReference>
<dbReference type="InterPro" id="IPR050148">
    <property type="entry name" value="Terpene_synthase-like"/>
</dbReference>
<dbReference type="InterPro" id="IPR005630">
    <property type="entry name" value="Terpene_synthase_metal-bd"/>
</dbReference>
<dbReference type="InterPro" id="IPR008930">
    <property type="entry name" value="Terpenoid_cyclase/PrenylTrfase"/>
</dbReference>
<dbReference type="PANTHER" id="PTHR31225:SF205">
    <property type="entry name" value="(-)-GERMACRENE D SYNTHASE-LIKE"/>
    <property type="match status" value="1"/>
</dbReference>
<dbReference type="PANTHER" id="PTHR31225">
    <property type="entry name" value="OS04G0344100 PROTEIN-RELATED"/>
    <property type="match status" value="1"/>
</dbReference>
<dbReference type="Pfam" id="PF01397">
    <property type="entry name" value="Terpene_synth"/>
    <property type="match status" value="1"/>
</dbReference>
<dbReference type="Pfam" id="PF03936">
    <property type="entry name" value="Terpene_synth_C"/>
    <property type="match status" value="1"/>
</dbReference>
<dbReference type="SFLD" id="SFLDS00005">
    <property type="entry name" value="Isoprenoid_Synthase_Type_I"/>
    <property type="match status" value="1"/>
</dbReference>
<dbReference type="SFLD" id="SFLDG01019">
    <property type="entry name" value="Terpene_Cyclase_Like_1_C_Termi"/>
    <property type="match status" value="1"/>
</dbReference>
<dbReference type="SUPFAM" id="SSF48239">
    <property type="entry name" value="Terpenoid cyclases/Protein prenyltransferases"/>
    <property type="match status" value="1"/>
</dbReference>
<dbReference type="SUPFAM" id="SSF48576">
    <property type="entry name" value="Terpenoid synthases"/>
    <property type="match status" value="1"/>
</dbReference>
<evidence type="ECO:0000250" key="1"/>
<evidence type="ECO:0000250" key="2">
    <source>
        <dbReference type="UniProtKB" id="Q40577"/>
    </source>
</evidence>
<evidence type="ECO:0000269" key="3">
    <source>
    </source>
</evidence>
<evidence type="ECO:0000305" key="4"/>
<keyword id="KW-0963">Cytoplasm</keyword>
<keyword id="KW-0456">Lyase</keyword>
<keyword id="KW-0460">Magnesium</keyword>
<keyword id="KW-0464">Manganese</keyword>
<keyword id="KW-0479">Metal-binding</keyword>
<reference key="1">
    <citation type="journal article" date="2001" name="Biol. Pharm. Bull.">
        <title>Molecular cloning, functional expression and characterization of (E)-beta farnesene synthase from Citrus junos.</title>
        <authorList>
            <person name="Maruyama T."/>
            <person name="Ito M."/>
            <person name="Honda G."/>
        </authorList>
    </citation>
    <scope>NUCLEOTIDE SEQUENCE [MRNA]</scope>
    <scope>FUNCTION</scope>
    <scope>CATALYTIC ACTIVITY</scope>
</reference>